<organism>
    <name type="scientific">Oryza sativa subsp. japonica</name>
    <name type="common">Rice</name>
    <dbReference type="NCBI Taxonomy" id="39947"/>
    <lineage>
        <taxon>Eukaryota</taxon>
        <taxon>Viridiplantae</taxon>
        <taxon>Streptophyta</taxon>
        <taxon>Embryophyta</taxon>
        <taxon>Tracheophyta</taxon>
        <taxon>Spermatophyta</taxon>
        <taxon>Magnoliopsida</taxon>
        <taxon>Liliopsida</taxon>
        <taxon>Poales</taxon>
        <taxon>Poaceae</taxon>
        <taxon>BOP clade</taxon>
        <taxon>Oryzoideae</taxon>
        <taxon>Oryzeae</taxon>
        <taxon>Oryzinae</taxon>
        <taxon>Oryza</taxon>
        <taxon>Oryza sativa</taxon>
    </lineage>
</organism>
<reference key="1">
    <citation type="journal article" date="2005" name="Nature">
        <title>The map-based sequence of the rice genome.</title>
        <authorList>
            <consortium name="International rice genome sequencing project (IRGSP)"/>
        </authorList>
    </citation>
    <scope>NUCLEOTIDE SEQUENCE [LARGE SCALE GENOMIC DNA]</scope>
    <source>
        <strain>cv. Nipponbare</strain>
    </source>
</reference>
<reference key="2">
    <citation type="journal article" date="2008" name="Nucleic Acids Res.">
        <title>The rice annotation project database (RAP-DB): 2008 update.</title>
        <authorList>
            <consortium name="The rice annotation project (RAP)"/>
        </authorList>
    </citation>
    <scope>GENOME REANNOTATION</scope>
    <source>
        <strain>cv. Nipponbare</strain>
    </source>
</reference>
<reference key="3">
    <citation type="journal article" date="2013" name="Rice">
        <title>Improvement of the Oryza sativa Nipponbare reference genome using next generation sequence and optical map data.</title>
        <authorList>
            <person name="Kawahara Y."/>
            <person name="de la Bastide M."/>
            <person name="Hamilton J.P."/>
            <person name="Kanamori H."/>
            <person name="McCombie W.R."/>
            <person name="Ouyang S."/>
            <person name="Schwartz D.C."/>
            <person name="Tanaka T."/>
            <person name="Wu J."/>
            <person name="Zhou S."/>
            <person name="Childs K.L."/>
            <person name="Davidson R.M."/>
            <person name="Lin H."/>
            <person name="Quesada-Ocampo L."/>
            <person name="Vaillancourt B."/>
            <person name="Sakai H."/>
            <person name="Lee S.S."/>
            <person name="Kim J."/>
            <person name="Numa H."/>
            <person name="Itoh T."/>
            <person name="Buell C.R."/>
            <person name="Matsumoto T."/>
        </authorList>
    </citation>
    <scope>GENOME REANNOTATION</scope>
    <source>
        <strain>cv. Nipponbare</strain>
    </source>
</reference>
<reference key="4">
    <citation type="journal article" date="2003" name="Science">
        <title>Collection, mapping, and annotation of over 28,000 cDNA clones from japonica rice.</title>
        <authorList>
            <consortium name="The rice full-length cDNA consortium"/>
        </authorList>
    </citation>
    <scope>NUCLEOTIDE SEQUENCE [LARGE SCALE MRNA]</scope>
    <source>
        <strain>cv. Nipponbare</strain>
    </source>
</reference>
<reference key="5">
    <citation type="journal article" date="2002" name="Plant Physiol.">
        <title>Inventory and functional characterization of the HAK potassium transporters of rice.</title>
        <authorList>
            <person name="Banuelos M.A."/>
            <person name="Garciadeblas B."/>
            <person name="Cubero B."/>
            <person name="Rodriguez-Navarro A."/>
        </authorList>
    </citation>
    <scope>NUCLEOTIDE SEQUENCE [GENOMIC DNA] OF 25-740</scope>
    <scope>NOMENCLATURE</scope>
    <source>
        <strain>cv. Nipponbare</strain>
    </source>
</reference>
<reference key="6">
    <citation type="journal article" date="2009" name="J. Genet. Genomics">
        <title>Molecular evolution and functional divergence of HAK potassium transporter gene family in rice (Oryza sativa L.).</title>
        <authorList>
            <person name="Yang Z."/>
            <person name="Gao Q."/>
            <person name="Sun C."/>
            <person name="Li W."/>
            <person name="Gu S."/>
            <person name="Xu C."/>
        </authorList>
    </citation>
    <scope>GENE FAMILY</scope>
</reference>
<proteinExistence type="evidence at transcript level"/>
<accession>Q652J4</accession>
<accession>A0A0P0WZY4</accession>
<accession>Q0DA79</accession>
<accession>Q8VXB0</accession>
<gene>
    <name type="primary">HAK13</name>
    <name type="ordered locus">Os06g0671000</name>
    <name type="ordered locus">LOC_Os06g45940</name>
    <name type="ORF">OSJNBa0032M14.1</name>
    <name type="ORF">P0485A07.11</name>
</gene>
<evidence type="ECO:0000250" key="1"/>
<evidence type="ECO:0000255" key="2"/>
<evidence type="ECO:0000256" key="3">
    <source>
        <dbReference type="SAM" id="MobiDB-lite"/>
    </source>
</evidence>
<evidence type="ECO:0000305" key="4"/>
<keyword id="KW-0325">Glycoprotein</keyword>
<keyword id="KW-0406">Ion transport</keyword>
<keyword id="KW-0472">Membrane</keyword>
<keyword id="KW-0630">Potassium</keyword>
<keyword id="KW-0633">Potassium transport</keyword>
<keyword id="KW-1185">Reference proteome</keyword>
<keyword id="KW-0812">Transmembrane</keyword>
<keyword id="KW-1133">Transmembrane helix</keyword>
<keyword id="KW-0813">Transport</keyword>
<comment type="function">
    <text evidence="1">High-affinity potassium transporter.</text>
</comment>
<comment type="subcellular location">
    <subcellularLocation>
        <location evidence="4">Membrane</location>
        <topology evidence="4">Multi-pass membrane protein</topology>
    </subcellularLocation>
</comment>
<comment type="similarity">
    <text evidence="4">Belongs to the HAK/KUP transporter (TC 2.A.72.3) family.</text>
</comment>
<sequence>MDVEGGGGGGGGAPPRGRNSWGWQKGTLLLAYQSFGVVYGDLCISPVYVYKNTFSGKLRLHEEDEEILGVLSLVFWSLTLIPLLKYIILVLGADDNGEGGTFALYSLLCRNSKMGLLNNMRANHGSLSAYNKEEPCKESRNSMLIKAFFEKHYSLRVVLLLFVLMGTSMVIGDGVLTPTMSVLAAVSGLRIKFPELHENYTVLLACVILIGLFALQHYGTRRVGFLFAPILISWLTCIGGIGIYNIIKWNPSVIRALSPYYIYNFFRKAGKDGWSSLGGIVLCLTGAEAMFADLGHFSKLSLRLGFTIVVYPCLVLAYMGEAAYLSKHREDLQSSFYKALPDRVFWPVLFIATLATAVGSQAIISATFSIISQCRALGCFPRIKVVHTSSHVHGQIYIPEVNWVLMSLCLAVTIGFRDTEMIGNAYGLAVILVMCATTCLMFLVITTVWNRWVVWAAAFTVVFGSVELLYLSACLAKVPHGGWLPLLLSLTTLLVMSTWHYGTAMKQQHEVQNKVCLDHFLGLSSGIGLVRVPGVGFVYSSTTNGVPPMFAHFVTNFPAFHRVLIFVSLQTLAVPKVSPEERFLVGRIGSPANRLFRCIVRYGYKEGRWDHFNFENQLLMKVVEFLRHQDGSGGGGGDRMSAAASGEDEAMSVIPATSSSGGSNQHAFDAGTTTSSCEIDATAGGGGRRKVRFDNDGGGGGEEEEEAAEVKELMEEKEAGVSYMIGHTCVFAHESSSAVKKFAVNVVYGFLRRNSRRPAVVLGIPHTSLIEVGMAYRV</sequence>
<dbReference type="EMBL" id="AP005192">
    <property type="protein sequence ID" value="BAD45996.1"/>
    <property type="molecule type" value="Genomic_DNA"/>
</dbReference>
<dbReference type="EMBL" id="AP005610">
    <property type="protein sequence ID" value="BAD46273.1"/>
    <property type="molecule type" value="Genomic_DNA"/>
</dbReference>
<dbReference type="EMBL" id="AP008212">
    <property type="protein sequence ID" value="BAF20244.1"/>
    <property type="molecule type" value="Genomic_DNA"/>
</dbReference>
<dbReference type="EMBL" id="AP014962">
    <property type="protein sequence ID" value="BAS99076.1"/>
    <property type="molecule type" value="Genomic_DNA"/>
</dbReference>
<dbReference type="EMBL" id="AK111663">
    <property type="status" value="NOT_ANNOTATED_CDS"/>
    <property type="molecule type" value="mRNA"/>
</dbReference>
<dbReference type="EMBL" id="AJ427982">
    <property type="protein sequence ID" value="CAD21003.1"/>
    <property type="molecule type" value="Genomic_DNA"/>
</dbReference>
<dbReference type="FunCoup" id="Q652J4">
    <property type="interactions" value="26"/>
</dbReference>
<dbReference type="STRING" id="39947.Q652J4"/>
<dbReference type="GlyCosmos" id="Q652J4">
    <property type="glycosylation" value="1 site, No reported glycans"/>
</dbReference>
<dbReference type="PaxDb" id="39947-Q652J4"/>
<dbReference type="EnsemblPlants" id="Os06t0671000-01">
    <property type="protein sequence ID" value="Os06t0671000-01"/>
    <property type="gene ID" value="Os06g0671000"/>
</dbReference>
<dbReference type="Gramene" id="Os06t0671000-01">
    <property type="protein sequence ID" value="Os06t0671000-01"/>
    <property type="gene ID" value="Os06g0671000"/>
</dbReference>
<dbReference type="KEGG" id="dosa:Os06g0671000"/>
<dbReference type="eggNOG" id="ENOG502QPSA">
    <property type="taxonomic scope" value="Eukaryota"/>
</dbReference>
<dbReference type="HOGENOM" id="CLU_008142_2_0_1"/>
<dbReference type="InParanoid" id="Q652J4"/>
<dbReference type="OMA" id="HGAYWSI"/>
<dbReference type="Proteomes" id="UP000000763">
    <property type="component" value="Chromosome 6"/>
</dbReference>
<dbReference type="Proteomes" id="UP000059680">
    <property type="component" value="Chromosome 6"/>
</dbReference>
<dbReference type="GO" id="GO:0016020">
    <property type="term" value="C:membrane"/>
    <property type="evidence" value="ECO:0000318"/>
    <property type="project" value="GO_Central"/>
</dbReference>
<dbReference type="GO" id="GO:0015079">
    <property type="term" value="F:potassium ion transmembrane transporter activity"/>
    <property type="evidence" value="ECO:0000318"/>
    <property type="project" value="GO_Central"/>
</dbReference>
<dbReference type="GO" id="GO:0006813">
    <property type="term" value="P:potassium ion transport"/>
    <property type="evidence" value="ECO:0000318"/>
    <property type="project" value="GO_Central"/>
</dbReference>
<dbReference type="InterPro" id="IPR003855">
    <property type="entry name" value="K+_transporter"/>
</dbReference>
<dbReference type="InterPro" id="IPR053952">
    <property type="entry name" value="K_trans_C"/>
</dbReference>
<dbReference type="InterPro" id="IPR053951">
    <property type="entry name" value="K_trans_N"/>
</dbReference>
<dbReference type="NCBIfam" id="TIGR00794">
    <property type="entry name" value="kup"/>
    <property type="match status" value="1"/>
</dbReference>
<dbReference type="PANTHER" id="PTHR30540">
    <property type="entry name" value="OSMOTIC STRESS POTASSIUM TRANSPORTER"/>
    <property type="match status" value="1"/>
</dbReference>
<dbReference type="PANTHER" id="PTHR30540:SF88">
    <property type="entry name" value="POTASSIUM TRANSPORTER 13-RELATED"/>
    <property type="match status" value="1"/>
</dbReference>
<dbReference type="Pfam" id="PF02705">
    <property type="entry name" value="K_trans"/>
    <property type="match status" value="1"/>
</dbReference>
<dbReference type="Pfam" id="PF22776">
    <property type="entry name" value="K_trans_C"/>
    <property type="match status" value="1"/>
</dbReference>
<protein>
    <recommendedName>
        <fullName>Probable potassium transporter 13</fullName>
    </recommendedName>
    <alternativeName>
        <fullName>OsHAK13</fullName>
    </alternativeName>
</protein>
<feature type="chain" id="PRO_0000209100" description="Probable potassium transporter 13">
    <location>
        <begin position="1"/>
        <end position="778"/>
    </location>
</feature>
<feature type="topological domain" description="Cytoplasmic" evidence="2">
    <location>
        <begin position="1"/>
        <end position="28"/>
    </location>
</feature>
<feature type="transmembrane region" description="Helical; Name=1" evidence="2">
    <location>
        <begin position="29"/>
        <end position="49"/>
    </location>
</feature>
<feature type="topological domain" description="Extracellular" evidence="2">
    <location>
        <begin position="50"/>
        <end position="72"/>
    </location>
</feature>
<feature type="transmembrane region" description="Helical; Name=2" evidence="2">
    <location>
        <begin position="73"/>
        <end position="93"/>
    </location>
</feature>
<feature type="topological domain" description="Cytoplasmic" evidence="2">
    <location>
        <begin position="94"/>
        <end position="156"/>
    </location>
</feature>
<feature type="transmembrane region" description="Helical; Name=3" evidence="2">
    <location>
        <begin position="157"/>
        <end position="177"/>
    </location>
</feature>
<feature type="topological domain" description="Extracellular" evidence="2">
    <location>
        <begin position="178"/>
        <end position="199"/>
    </location>
</feature>
<feature type="transmembrane region" description="Helical; Name=4" evidence="2">
    <location>
        <begin position="200"/>
        <end position="220"/>
    </location>
</feature>
<feature type="topological domain" description="Cytoplasmic" evidence="2">
    <location>
        <begin position="221"/>
        <end position="222"/>
    </location>
</feature>
<feature type="transmembrane region" description="Helical; Name=5" evidence="2">
    <location>
        <begin position="223"/>
        <end position="243"/>
    </location>
</feature>
<feature type="topological domain" description="Extracellular" evidence="2">
    <location>
        <begin position="244"/>
        <end position="276"/>
    </location>
</feature>
<feature type="transmembrane region" description="Helical; Name=6" evidence="2">
    <location>
        <begin position="277"/>
        <end position="297"/>
    </location>
</feature>
<feature type="topological domain" description="Cytoplasmic" evidence="2">
    <location>
        <begin position="298"/>
        <end position="303"/>
    </location>
</feature>
<feature type="transmembrane region" description="Helical; Name=7" evidence="2">
    <location>
        <begin position="304"/>
        <end position="324"/>
    </location>
</feature>
<feature type="topological domain" description="Extracellular" evidence="2">
    <location>
        <begin position="325"/>
        <end position="343"/>
    </location>
</feature>
<feature type="transmembrane region" description="Helical; Name=8" evidence="2">
    <location>
        <begin position="344"/>
        <end position="364"/>
    </location>
</feature>
<feature type="topological domain" description="Cytoplasmic" evidence="2">
    <location>
        <begin position="365"/>
        <end position="395"/>
    </location>
</feature>
<feature type="transmembrane region" description="Helical; Name=9" evidence="2">
    <location>
        <begin position="396"/>
        <end position="416"/>
    </location>
</feature>
<feature type="topological domain" description="Extracellular" evidence="2">
    <location>
        <begin position="417"/>
        <end position="424"/>
    </location>
</feature>
<feature type="transmembrane region" description="Helical; Name=10" evidence="2">
    <location>
        <begin position="425"/>
        <end position="445"/>
    </location>
</feature>
<feature type="topological domain" description="Cytoplasmic" evidence="2">
    <location>
        <begin position="446"/>
        <end position="451"/>
    </location>
</feature>
<feature type="transmembrane region" description="Helical; Name=11" evidence="2">
    <location>
        <begin position="452"/>
        <end position="472"/>
    </location>
</feature>
<feature type="topological domain" description="Extracellular" evidence="2">
    <location>
        <begin position="473"/>
        <end position="477"/>
    </location>
</feature>
<feature type="transmembrane region" description="Helical; Name=12" evidence="2">
    <location>
        <begin position="478"/>
        <end position="498"/>
    </location>
</feature>
<feature type="topological domain" description="Cytoplasmic" evidence="2">
    <location>
        <begin position="499"/>
        <end position="778"/>
    </location>
</feature>
<feature type="region of interest" description="Disordered" evidence="3">
    <location>
        <begin position="655"/>
        <end position="704"/>
    </location>
</feature>
<feature type="compositionally biased region" description="Polar residues" evidence="3">
    <location>
        <begin position="655"/>
        <end position="677"/>
    </location>
</feature>
<feature type="glycosylation site" description="N-linked (GlcNAc...) asparagine" evidence="2">
    <location>
        <position position="199"/>
    </location>
</feature>
<feature type="sequence conflict" description="In Ref. 4; AK111663." evidence="4" ref="4">
    <original>L</original>
    <variation>F</variation>
    <location>
        <position position="212"/>
    </location>
</feature>
<name>HAK13_ORYSJ</name>